<gene>
    <name type="primary">ermA</name>
</gene>
<sequence>MSAYGHGRHEHGQNFLTNHKIINSIIDLVKQTSGPIIEIGPGSGALTHPMAHLGRAITAVEVDAKLAAKITQETSSAAVEVVHDDFLNFRLPATPCVIVGNIPFHLTTAILRKLLHAPAWTDAVLLMQWEVARRRAGVGASTMMTAQWSPWFTFHLGSRVPRSAFRPQPNVDGGILVIRRVGDPKIPIEQRKAFQAMVHTVFTARGRGIGEILRRQGCFHHVQKHNHGCAREESTPRPYLPDCTPTTGSISSR</sequence>
<reference key="1">
    <citation type="journal article" date="1990" name="Nucleic Acids Res.">
        <title>Nucleotide sequence of the erythromycin resistance gene from the Corynebacterium plasmid pNG2.</title>
        <authorList>
            <person name="Hodgson A.L.M."/>
            <person name="Krywult J."/>
            <person name="Radford A.J."/>
        </authorList>
    </citation>
    <scope>NUCLEOTIDE SEQUENCE [GENOMIC DNA]</scope>
</reference>
<reference key="2">
    <citation type="journal article" date="1988" name="FEMS Microbiol. Lett.">
        <title>Identification of a methylase gene for erythromycin resistance within the sequence of a spontaneously deleting fragment of Corynebacterium diphtheriae plasmid pNG2.</title>
        <authorList>
            <person name="Serwold-Davis T.M."/>
            <person name="Groman N.B."/>
        </authorList>
    </citation>
    <scope>NUCLEOTIDE SEQUENCE [GENOMIC DNA]</scope>
    <source>
        <strain>S601</strain>
    </source>
</reference>
<proteinExistence type="inferred from homology"/>
<protein>
    <recommendedName>
        <fullName>rRNA adenine N-6-methyltransferase</fullName>
        <ecNumber evidence="1">2.1.1.-</ecNumber>
    </recommendedName>
    <alternativeName>
        <fullName>Erythromycin resistance protein</fullName>
    </alternativeName>
    <alternativeName>
        <fullName>Macrolide-lincosamide-streptogramin B resistance protein</fullName>
    </alternativeName>
</protein>
<feature type="chain" id="PRO_0000101667" description="rRNA adenine N-6-methyltransferase">
    <location>
        <begin position="1"/>
        <end position="253"/>
    </location>
</feature>
<feature type="region of interest" description="Disordered" evidence="2">
    <location>
        <begin position="229"/>
        <end position="253"/>
    </location>
</feature>
<feature type="compositionally biased region" description="Polar residues" evidence="2">
    <location>
        <begin position="244"/>
        <end position="253"/>
    </location>
</feature>
<feature type="binding site" evidence="1">
    <location>
        <position position="14"/>
    </location>
    <ligand>
        <name>S-adenosyl-L-methionine</name>
        <dbReference type="ChEBI" id="CHEBI:59789"/>
    </ligand>
</feature>
<feature type="binding site" evidence="1">
    <location>
        <position position="16"/>
    </location>
    <ligand>
        <name>S-adenosyl-L-methionine</name>
        <dbReference type="ChEBI" id="CHEBI:59789"/>
    </ligand>
</feature>
<feature type="binding site" evidence="1">
    <location>
        <position position="40"/>
    </location>
    <ligand>
        <name>S-adenosyl-L-methionine</name>
        <dbReference type="ChEBI" id="CHEBI:59789"/>
    </ligand>
</feature>
<feature type="binding site" evidence="1">
    <location>
        <position position="61"/>
    </location>
    <ligand>
        <name>S-adenosyl-L-methionine</name>
        <dbReference type="ChEBI" id="CHEBI:59789"/>
    </ligand>
</feature>
<feature type="binding site" evidence="1">
    <location>
        <position position="85"/>
    </location>
    <ligand>
        <name>S-adenosyl-L-methionine</name>
        <dbReference type="ChEBI" id="CHEBI:59789"/>
    </ligand>
</feature>
<feature type="binding site" evidence="1">
    <location>
        <position position="101"/>
    </location>
    <ligand>
        <name>S-adenosyl-L-methionine</name>
        <dbReference type="ChEBI" id="CHEBI:59789"/>
    </ligand>
</feature>
<feature type="sequence conflict" description="In Ref. 2; AAA98484." evidence="3" ref="2">
    <original>H</original>
    <variation>Q</variation>
    <location>
        <position position="6"/>
    </location>
</feature>
<feature type="sequence conflict" description="In Ref. 2; AAA98484." evidence="3" ref="2">
    <original>S</original>
    <variation>T</variation>
    <location>
        <position position="141"/>
    </location>
</feature>
<feature type="sequence conflict" description="In Ref. 2; AAA98484." evidence="3" ref="2">
    <original>TPTTGSISSR</original>
    <variation>YTNDWIDLFQVTGSSLPHHRPISPSGSSQRPPQRKNRSRRR</variation>
    <location>
        <begin position="244"/>
        <end position="253"/>
    </location>
</feature>
<evidence type="ECO:0000255" key="1">
    <source>
        <dbReference type="PROSITE-ProRule" id="PRU01026"/>
    </source>
</evidence>
<evidence type="ECO:0000256" key="2">
    <source>
        <dbReference type="SAM" id="MobiDB-lite"/>
    </source>
</evidence>
<evidence type="ECO:0000305" key="3"/>
<organism>
    <name type="scientific">Corynebacterium diphtheriae</name>
    <dbReference type="NCBI Taxonomy" id="1717"/>
    <lineage>
        <taxon>Bacteria</taxon>
        <taxon>Bacillati</taxon>
        <taxon>Actinomycetota</taxon>
        <taxon>Actinomycetes</taxon>
        <taxon>Mycobacteriales</taxon>
        <taxon>Corynebacteriaceae</taxon>
        <taxon>Corynebacterium</taxon>
    </lineage>
</organism>
<geneLocation type="plasmid">
    <name>pNG2</name>
</geneLocation>
<keyword id="KW-0046">Antibiotic resistance</keyword>
<keyword id="KW-0489">Methyltransferase</keyword>
<keyword id="KW-0614">Plasmid</keyword>
<keyword id="KW-0694">RNA-binding</keyword>
<keyword id="KW-0949">S-adenosyl-L-methionine</keyword>
<keyword id="KW-0808">Transferase</keyword>
<comment type="function">
    <text>Involved in erythromycin resistance.</text>
</comment>
<comment type="similarity">
    <text evidence="1">Belongs to the class I-like SAM-binding methyltransferase superfamily. rRNA adenine N(6)-methyltransferase family.</text>
</comment>
<accession>P16898</accession>
<dbReference type="EC" id="2.1.1.-" evidence="1"/>
<dbReference type="EMBL" id="X51472">
    <property type="protein sequence ID" value="CAA35836.1"/>
    <property type="molecule type" value="Genomic_DNA"/>
</dbReference>
<dbReference type="EMBL" id="M36726">
    <property type="protein sequence ID" value="AAA98484.1"/>
    <property type="molecule type" value="Genomic_DNA"/>
</dbReference>
<dbReference type="PIR" id="S09215">
    <property type="entry name" value="S09215"/>
</dbReference>
<dbReference type="RefSeq" id="WP_032488331.1">
    <property type="nucleotide sequence ID" value="NG_047847.1"/>
</dbReference>
<dbReference type="SMR" id="P16898"/>
<dbReference type="GO" id="GO:0005829">
    <property type="term" value="C:cytosol"/>
    <property type="evidence" value="ECO:0007669"/>
    <property type="project" value="TreeGrafter"/>
</dbReference>
<dbReference type="GO" id="GO:0003723">
    <property type="term" value="F:RNA binding"/>
    <property type="evidence" value="ECO:0007669"/>
    <property type="project" value="UniProtKB-KW"/>
</dbReference>
<dbReference type="GO" id="GO:0000179">
    <property type="term" value="F:rRNA (adenine-N6,N6-)-dimethyltransferase activity"/>
    <property type="evidence" value="ECO:0007669"/>
    <property type="project" value="InterPro"/>
</dbReference>
<dbReference type="GO" id="GO:0046677">
    <property type="term" value="P:response to antibiotic"/>
    <property type="evidence" value="ECO:0007669"/>
    <property type="project" value="UniProtKB-KW"/>
</dbReference>
<dbReference type="CDD" id="cd02440">
    <property type="entry name" value="AdoMet_MTases"/>
    <property type="match status" value="1"/>
</dbReference>
<dbReference type="Gene3D" id="1.10.8.100">
    <property type="entry name" value="Ribosomal RNA adenine dimethylase-like, domain 2"/>
    <property type="match status" value="1"/>
</dbReference>
<dbReference type="Gene3D" id="3.40.50.150">
    <property type="entry name" value="Vaccinia Virus protein VP39"/>
    <property type="match status" value="1"/>
</dbReference>
<dbReference type="InterPro" id="IPR001737">
    <property type="entry name" value="KsgA/Erm"/>
</dbReference>
<dbReference type="InterPro" id="IPR023165">
    <property type="entry name" value="rRNA_Ade_diMease-like_C"/>
</dbReference>
<dbReference type="InterPro" id="IPR020596">
    <property type="entry name" value="rRNA_Ade_Mease_Trfase_CS"/>
</dbReference>
<dbReference type="InterPro" id="IPR020598">
    <property type="entry name" value="rRNA_Ade_methylase_Trfase_N"/>
</dbReference>
<dbReference type="InterPro" id="IPR029063">
    <property type="entry name" value="SAM-dependent_MTases_sf"/>
</dbReference>
<dbReference type="NCBIfam" id="NF000499">
    <property type="entry name" value="Erm23S_rRNA_broad"/>
    <property type="match status" value="1"/>
</dbReference>
<dbReference type="PANTHER" id="PTHR11727">
    <property type="entry name" value="DIMETHYLADENOSINE TRANSFERASE"/>
    <property type="match status" value="1"/>
</dbReference>
<dbReference type="PANTHER" id="PTHR11727:SF7">
    <property type="entry name" value="DIMETHYLADENOSINE TRANSFERASE-RELATED"/>
    <property type="match status" value="1"/>
</dbReference>
<dbReference type="Pfam" id="PF00398">
    <property type="entry name" value="RrnaAD"/>
    <property type="match status" value="1"/>
</dbReference>
<dbReference type="SMART" id="SM00650">
    <property type="entry name" value="rADc"/>
    <property type="match status" value="1"/>
</dbReference>
<dbReference type="SUPFAM" id="SSF53335">
    <property type="entry name" value="S-adenosyl-L-methionine-dependent methyltransferases"/>
    <property type="match status" value="1"/>
</dbReference>
<dbReference type="PROSITE" id="PS01131">
    <property type="entry name" value="RRNA_A_DIMETH"/>
    <property type="match status" value="1"/>
</dbReference>
<dbReference type="PROSITE" id="PS51689">
    <property type="entry name" value="SAM_RNA_A_N6_MT"/>
    <property type="match status" value="1"/>
</dbReference>
<name>ERMA_CORDP</name>